<dbReference type="EC" id="4.1.1.50" evidence="1"/>
<dbReference type="EMBL" id="CP000939">
    <property type="protein sequence ID" value="ACA45904.1"/>
    <property type="molecule type" value="Genomic_DNA"/>
</dbReference>
<dbReference type="SMR" id="B1IFK1"/>
<dbReference type="KEGG" id="cbb:CLD_1157"/>
<dbReference type="HOGENOM" id="CLU_125470_2_3_9"/>
<dbReference type="UniPathway" id="UPA00331">
    <property type="reaction ID" value="UER00451"/>
</dbReference>
<dbReference type="Proteomes" id="UP000008541">
    <property type="component" value="Chromosome"/>
</dbReference>
<dbReference type="GO" id="GO:0005829">
    <property type="term" value="C:cytosol"/>
    <property type="evidence" value="ECO:0007669"/>
    <property type="project" value="TreeGrafter"/>
</dbReference>
<dbReference type="GO" id="GO:0004014">
    <property type="term" value="F:adenosylmethionine decarboxylase activity"/>
    <property type="evidence" value="ECO:0007669"/>
    <property type="project" value="UniProtKB-UniRule"/>
</dbReference>
<dbReference type="GO" id="GO:0008295">
    <property type="term" value="P:spermidine biosynthetic process"/>
    <property type="evidence" value="ECO:0007669"/>
    <property type="project" value="UniProtKB-UniRule"/>
</dbReference>
<dbReference type="FunFam" id="3.60.90.10:FF:000012">
    <property type="entry name" value="S-adenosylmethionine decarboxylase proenzyme"/>
    <property type="match status" value="1"/>
</dbReference>
<dbReference type="Gene3D" id="3.60.90.10">
    <property type="entry name" value="S-adenosylmethionine decarboxylase"/>
    <property type="match status" value="1"/>
</dbReference>
<dbReference type="HAMAP" id="MF_00464">
    <property type="entry name" value="AdoMetDC_1"/>
    <property type="match status" value="1"/>
</dbReference>
<dbReference type="InterPro" id="IPR003826">
    <property type="entry name" value="AdoMetDC_fam_prok"/>
</dbReference>
<dbReference type="InterPro" id="IPR016067">
    <property type="entry name" value="S-AdoMet_deCO2ase_core"/>
</dbReference>
<dbReference type="InterPro" id="IPR017716">
    <property type="entry name" value="S-AdoMet_deCOase_pro-enz"/>
</dbReference>
<dbReference type="NCBIfam" id="TIGR03330">
    <property type="entry name" value="SAM_DCase_Bsu"/>
    <property type="match status" value="1"/>
</dbReference>
<dbReference type="PANTHER" id="PTHR33866">
    <property type="entry name" value="S-ADENOSYLMETHIONINE DECARBOXYLASE PROENZYME"/>
    <property type="match status" value="1"/>
</dbReference>
<dbReference type="PANTHER" id="PTHR33866:SF2">
    <property type="entry name" value="S-ADENOSYLMETHIONINE DECARBOXYLASE PROENZYME"/>
    <property type="match status" value="1"/>
</dbReference>
<dbReference type="Pfam" id="PF02675">
    <property type="entry name" value="AdoMet_dc"/>
    <property type="match status" value="1"/>
</dbReference>
<dbReference type="SUPFAM" id="SSF56276">
    <property type="entry name" value="S-adenosylmethionine decarboxylase"/>
    <property type="match status" value="1"/>
</dbReference>
<gene>
    <name evidence="1" type="primary">speH</name>
    <name type="ordered locus">CLD_1157</name>
</gene>
<evidence type="ECO:0000255" key="1">
    <source>
        <dbReference type="HAMAP-Rule" id="MF_00464"/>
    </source>
</evidence>
<keyword id="KW-0068">Autocatalytic cleavage</keyword>
<keyword id="KW-0210">Decarboxylase</keyword>
<keyword id="KW-0456">Lyase</keyword>
<keyword id="KW-0620">Polyamine biosynthesis</keyword>
<keyword id="KW-0670">Pyruvate</keyword>
<keyword id="KW-0949">S-adenosyl-L-methionine</keyword>
<keyword id="KW-0704">Schiff base</keyword>
<keyword id="KW-0745">Spermidine biosynthesis</keyword>
<keyword id="KW-0865">Zymogen</keyword>
<accession>B1IFK1</accession>
<comment type="function">
    <text evidence="1">Catalyzes the decarboxylation of S-adenosylmethionine to S-adenosylmethioninamine (dcAdoMet), the propylamine donor required for the synthesis of the polyamines spermine and spermidine from the diamine putrescine.</text>
</comment>
<comment type="catalytic activity">
    <reaction evidence="1">
        <text>S-adenosyl-L-methionine + H(+) = S-adenosyl 3-(methylsulfanyl)propylamine + CO2</text>
        <dbReference type="Rhea" id="RHEA:15981"/>
        <dbReference type="ChEBI" id="CHEBI:15378"/>
        <dbReference type="ChEBI" id="CHEBI:16526"/>
        <dbReference type="ChEBI" id="CHEBI:57443"/>
        <dbReference type="ChEBI" id="CHEBI:59789"/>
        <dbReference type="EC" id="4.1.1.50"/>
    </reaction>
</comment>
<comment type="cofactor">
    <cofactor evidence="1">
        <name>pyruvate</name>
        <dbReference type="ChEBI" id="CHEBI:15361"/>
    </cofactor>
    <text evidence="1">Binds 1 pyruvoyl group covalently per subunit.</text>
</comment>
<comment type="pathway">
    <text evidence="1">Amine and polyamine biosynthesis; S-adenosylmethioninamine biosynthesis; S-adenosylmethioninamine from S-adenosyl-L-methionine: step 1/1.</text>
</comment>
<comment type="subunit">
    <text evidence="1">Heterotetramer of two alpha and two beta chains arranged as a dimer of alpha/beta heterodimers.</text>
</comment>
<comment type="PTM">
    <text evidence="1">Is synthesized initially as an inactive proenzyme. Formation of the active enzyme involves a self-maturation process in which the active site pyruvoyl group is generated from an internal serine residue via an autocatalytic post-translational modification. Two non-identical subunits are generated from the proenzyme in this reaction, and the pyruvate is formed at the N-terminus of the alpha chain, which is derived from the carboxyl end of the proenzyme. The post-translation cleavage follows an unusual pathway, termed non-hydrolytic serinolysis, in which the side chain hydroxyl group of the serine supplies its oxygen atom to form the C-terminus of the beta chain, while the remainder of the serine residue undergoes an oxidative deamination to produce ammonia and the pyruvoyl group blocking the N-terminus of the alpha chain.</text>
</comment>
<comment type="similarity">
    <text evidence="1">Belongs to the prokaryotic AdoMetDC family. Type 1 subfamily.</text>
</comment>
<sequence length="116" mass="13428">MKYSGYHLVIDLFGCNFDQLENTEYIIEMLKKLARALDTKIVAKAFHKFHPQGFSGALIISESHITIHTWPEDAYIGIDIFTCSKCFDSRKIVAYLKENLIFKKVEIKEILRGKID</sequence>
<organism>
    <name type="scientific">Clostridium botulinum (strain Okra / Type B1)</name>
    <dbReference type="NCBI Taxonomy" id="498213"/>
    <lineage>
        <taxon>Bacteria</taxon>
        <taxon>Bacillati</taxon>
        <taxon>Bacillota</taxon>
        <taxon>Clostridia</taxon>
        <taxon>Eubacteriales</taxon>
        <taxon>Clostridiaceae</taxon>
        <taxon>Clostridium</taxon>
    </lineage>
</organism>
<proteinExistence type="inferred from homology"/>
<reference key="1">
    <citation type="journal article" date="2007" name="PLoS ONE">
        <title>Analysis of the neurotoxin complex genes in Clostridium botulinum A1-A4 and B1 strains: BoNT/A3, /Ba4 and /B1 clusters are located within plasmids.</title>
        <authorList>
            <person name="Smith T.J."/>
            <person name="Hill K.K."/>
            <person name="Foley B.T."/>
            <person name="Detter J.C."/>
            <person name="Munk A.C."/>
            <person name="Bruce D.C."/>
            <person name="Doggett N.A."/>
            <person name="Smith L.A."/>
            <person name="Marks J.D."/>
            <person name="Xie G."/>
            <person name="Brettin T.S."/>
        </authorList>
    </citation>
    <scope>NUCLEOTIDE SEQUENCE [LARGE SCALE GENOMIC DNA]</scope>
    <source>
        <strain>Okra / Type B1</strain>
    </source>
</reference>
<name>SPEH_CLOBK</name>
<feature type="chain" id="PRO_1000193185" description="S-adenosylmethionine decarboxylase beta chain" evidence="1">
    <location>
        <begin position="1"/>
        <end position="62"/>
    </location>
</feature>
<feature type="chain" id="PRO_1000193186" description="S-adenosylmethionine decarboxylase alpha chain" evidence="1">
    <location>
        <begin position="63"/>
        <end position="116"/>
    </location>
</feature>
<feature type="active site" description="Schiff-base intermediate with substrate; via pyruvic acid" evidence="1">
    <location>
        <position position="63"/>
    </location>
</feature>
<feature type="active site" description="Proton acceptor; for processing activity" evidence="1">
    <location>
        <position position="68"/>
    </location>
</feature>
<feature type="active site" description="Proton donor; for catalytic activity" evidence="1">
    <location>
        <position position="83"/>
    </location>
</feature>
<feature type="site" description="Cleavage (non-hydrolytic); by autolysis" evidence="1">
    <location>
        <begin position="62"/>
        <end position="63"/>
    </location>
</feature>
<feature type="modified residue" description="Pyruvic acid (Ser); by autocatalysis" evidence="1">
    <location>
        <position position="63"/>
    </location>
</feature>
<protein>
    <recommendedName>
        <fullName evidence="1">S-adenosylmethionine decarboxylase proenzyme</fullName>
        <shortName evidence="1">AdoMetDC</shortName>
        <shortName evidence="1">SAMDC</shortName>
        <ecNumber evidence="1">4.1.1.50</ecNumber>
    </recommendedName>
    <component>
        <recommendedName>
            <fullName evidence="1">S-adenosylmethionine decarboxylase beta chain</fullName>
        </recommendedName>
    </component>
    <component>
        <recommendedName>
            <fullName evidence="1">S-adenosylmethionine decarboxylase alpha chain</fullName>
        </recommendedName>
    </component>
</protein>